<dbReference type="EC" id="4.2.1.11" evidence="1"/>
<dbReference type="EMBL" id="CP000685">
    <property type="protein sequence ID" value="ABQ03404.1"/>
    <property type="molecule type" value="Genomic_DNA"/>
</dbReference>
<dbReference type="RefSeq" id="WP_012022474.1">
    <property type="nucleotide sequence ID" value="NZ_MUGZ01000005.1"/>
</dbReference>
<dbReference type="SMR" id="A5FN12"/>
<dbReference type="STRING" id="376686.Fjoh_0368"/>
<dbReference type="KEGG" id="fjo:Fjoh_0368"/>
<dbReference type="eggNOG" id="COG0148">
    <property type="taxonomic scope" value="Bacteria"/>
</dbReference>
<dbReference type="HOGENOM" id="CLU_031223_2_1_10"/>
<dbReference type="OrthoDB" id="9804716at2"/>
<dbReference type="UniPathway" id="UPA00109">
    <property type="reaction ID" value="UER00187"/>
</dbReference>
<dbReference type="Proteomes" id="UP000006694">
    <property type="component" value="Chromosome"/>
</dbReference>
<dbReference type="GO" id="GO:0009986">
    <property type="term" value="C:cell surface"/>
    <property type="evidence" value="ECO:0007669"/>
    <property type="project" value="UniProtKB-SubCell"/>
</dbReference>
<dbReference type="GO" id="GO:0005576">
    <property type="term" value="C:extracellular region"/>
    <property type="evidence" value="ECO:0007669"/>
    <property type="project" value="UniProtKB-SubCell"/>
</dbReference>
<dbReference type="GO" id="GO:0000015">
    <property type="term" value="C:phosphopyruvate hydratase complex"/>
    <property type="evidence" value="ECO:0007669"/>
    <property type="project" value="InterPro"/>
</dbReference>
<dbReference type="GO" id="GO:0000287">
    <property type="term" value="F:magnesium ion binding"/>
    <property type="evidence" value="ECO:0007669"/>
    <property type="project" value="UniProtKB-UniRule"/>
</dbReference>
<dbReference type="GO" id="GO:0004634">
    <property type="term" value="F:phosphopyruvate hydratase activity"/>
    <property type="evidence" value="ECO:0007669"/>
    <property type="project" value="UniProtKB-UniRule"/>
</dbReference>
<dbReference type="GO" id="GO:0006096">
    <property type="term" value="P:glycolytic process"/>
    <property type="evidence" value="ECO:0007669"/>
    <property type="project" value="UniProtKB-UniRule"/>
</dbReference>
<dbReference type="CDD" id="cd03313">
    <property type="entry name" value="enolase"/>
    <property type="match status" value="1"/>
</dbReference>
<dbReference type="FunFam" id="3.20.20.120:FF:000001">
    <property type="entry name" value="Enolase"/>
    <property type="match status" value="1"/>
</dbReference>
<dbReference type="FunFam" id="3.30.390.10:FF:000001">
    <property type="entry name" value="Enolase"/>
    <property type="match status" value="1"/>
</dbReference>
<dbReference type="Gene3D" id="3.20.20.120">
    <property type="entry name" value="Enolase-like C-terminal domain"/>
    <property type="match status" value="1"/>
</dbReference>
<dbReference type="Gene3D" id="3.30.390.10">
    <property type="entry name" value="Enolase-like, N-terminal domain"/>
    <property type="match status" value="1"/>
</dbReference>
<dbReference type="HAMAP" id="MF_00318">
    <property type="entry name" value="Enolase"/>
    <property type="match status" value="1"/>
</dbReference>
<dbReference type="InterPro" id="IPR000941">
    <property type="entry name" value="Enolase"/>
</dbReference>
<dbReference type="InterPro" id="IPR036849">
    <property type="entry name" value="Enolase-like_C_sf"/>
</dbReference>
<dbReference type="InterPro" id="IPR029017">
    <property type="entry name" value="Enolase-like_N"/>
</dbReference>
<dbReference type="InterPro" id="IPR020810">
    <property type="entry name" value="Enolase_C"/>
</dbReference>
<dbReference type="InterPro" id="IPR020809">
    <property type="entry name" value="Enolase_CS"/>
</dbReference>
<dbReference type="InterPro" id="IPR020811">
    <property type="entry name" value="Enolase_N"/>
</dbReference>
<dbReference type="NCBIfam" id="TIGR01060">
    <property type="entry name" value="eno"/>
    <property type="match status" value="1"/>
</dbReference>
<dbReference type="PANTHER" id="PTHR11902">
    <property type="entry name" value="ENOLASE"/>
    <property type="match status" value="1"/>
</dbReference>
<dbReference type="PANTHER" id="PTHR11902:SF1">
    <property type="entry name" value="ENOLASE"/>
    <property type="match status" value="1"/>
</dbReference>
<dbReference type="Pfam" id="PF00113">
    <property type="entry name" value="Enolase_C"/>
    <property type="match status" value="1"/>
</dbReference>
<dbReference type="Pfam" id="PF03952">
    <property type="entry name" value="Enolase_N"/>
    <property type="match status" value="1"/>
</dbReference>
<dbReference type="PIRSF" id="PIRSF001400">
    <property type="entry name" value="Enolase"/>
    <property type="match status" value="1"/>
</dbReference>
<dbReference type="PRINTS" id="PR00148">
    <property type="entry name" value="ENOLASE"/>
</dbReference>
<dbReference type="SFLD" id="SFLDS00001">
    <property type="entry name" value="Enolase"/>
    <property type="match status" value="1"/>
</dbReference>
<dbReference type="SFLD" id="SFLDF00002">
    <property type="entry name" value="enolase"/>
    <property type="match status" value="1"/>
</dbReference>
<dbReference type="SMART" id="SM01192">
    <property type="entry name" value="Enolase_C"/>
    <property type="match status" value="1"/>
</dbReference>
<dbReference type="SMART" id="SM01193">
    <property type="entry name" value="Enolase_N"/>
    <property type="match status" value="1"/>
</dbReference>
<dbReference type="SUPFAM" id="SSF51604">
    <property type="entry name" value="Enolase C-terminal domain-like"/>
    <property type="match status" value="1"/>
</dbReference>
<dbReference type="SUPFAM" id="SSF54826">
    <property type="entry name" value="Enolase N-terminal domain-like"/>
    <property type="match status" value="1"/>
</dbReference>
<dbReference type="PROSITE" id="PS00164">
    <property type="entry name" value="ENOLASE"/>
    <property type="match status" value="1"/>
</dbReference>
<gene>
    <name evidence="1" type="primary">eno</name>
    <name type="ordered locus">Fjoh_0368</name>
</gene>
<name>ENO_FLAJ1</name>
<protein>
    <recommendedName>
        <fullName evidence="1">Enolase</fullName>
        <ecNumber evidence="1">4.2.1.11</ecNumber>
    </recommendedName>
    <alternativeName>
        <fullName evidence="1">2-phospho-D-glycerate hydro-lyase</fullName>
    </alternativeName>
    <alternativeName>
        <fullName evidence="1">2-phosphoglycerate dehydratase</fullName>
    </alternativeName>
</protein>
<keyword id="KW-0963">Cytoplasm</keyword>
<keyword id="KW-0324">Glycolysis</keyword>
<keyword id="KW-0456">Lyase</keyword>
<keyword id="KW-0460">Magnesium</keyword>
<keyword id="KW-0479">Metal-binding</keyword>
<keyword id="KW-0964">Secreted</keyword>
<accession>A5FN12</accession>
<feature type="chain" id="PRO_1000079135" description="Enolase">
    <location>
        <begin position="1"/>
        <end position="430"/>
    </location>
</feature>
<feature type="active site" description="Proton donor" evidence="1">
    <location>
        <position position="204"/>
    </location>
</feature>
<feature type="active site" description="Proton acceptor" evidence="1">
    <location>
        <position position="341"/>
    </location>
</feature>
<feature type="binding site" evidence="1">
    <location>
        <position position="162"/>
    </location>
    <ligand>
        <name>(2R)-2-phosphoglycerate</name>
        <dbReference type="ChEBI" id="CHEBI:58289"/>
    </ligand>
</feature>
<feature type="binding site" evidence="1">
    <location>
        <position position="242"/>
    </location>
    <ligand>
        <name>Mg(2+)</name>
        <dbReference type="ChEBI" id="CHEBI:18420"/>
    </ligand>
</feature>
<feature type="binding site" evidence="1">
    <location>
        <position position="289"/>
    </location>
    <ligand>
        <name>Mg(2+)</name>
        <dbReference type="ChEBI" id="CHEBI:18420"/>
    </ligand>
</feature>
<feature type="binding site" evidence="1">
    <location>
        <position position="316"/>
    </location>
    <ligand>
        <name>Mg(2+)</name>
        <dbReference type="ChEBI" id="CHEBI:18420"/>
    </ligand>
</feature>
<feature type="binding site" evidence="1">
    <location>
        <position position="341"/>
    </location>
    <ligand>
        <name>(2R)-2-phosphoglycerate</name>
        <dbReference type="ChEBI" id="CHEBI:58289"/>
    </ligand>
</feature>
<feature type="binding site" evidence="1">
    <location>
        <position position="370"/>
    </location>
    <ligand>
        <name>(2R)-2-phosphoglycerate</name>
        <dbReference type="ChEBI" id="CHEBI:58289"/>
    </ligand>
</feature>
<feature type="binding site" evidence="1">
    <location>
        <position position="371"/>
    </location>
    <ligand>
        <name>(2R)-2-phosphoglycerate</name>
        <dbReference type="ChEBI" id="CHEBI:58289"/>
    </ligand>
</feature>
<feature type="binding site" evidence="1">
    <location>
        <position position="392"/>
    </location>
    <ligand>
        <name>(2R)-2-phosphoglycerate</name>
        <dbReference type="ChEBI" id="CHEBI:58289"/>
    </ligand>
</feature>
<sequence length="430" mass="45783">MSIIIKVHARQILDSRGNPTIEVDVVTENGVLGRAAVPSGASTGEHEAVELRDGGKAYLGKGVLNAVNNVNTVIAEELVGTSVFEQNTIDQLMIDLDGTPNKSKLGANAILGVSLAAAKAAANELGLPLYRYVGGVSANTLPVPMMNIINGGSHSDAPIAFQEFMIFPVKATSFTHAMQMGTEIFHSLKKVLHDRGLSTAVGDEGGFAPNLAGGTEDALDTIKLAVEKAGYTFGDEIMIALDCAASEFYVDGKYDYTKFEGETGKIRTSAEQADYLAELAAKYPIISIEDGMYEDDWDGWKALTEKIGNKVQLVGDDLFVTNVARLSTGIEKGIANSILVKVNQIGTLTETIAAVNMAKNAGYTSVMSHRSGETEDNTIADLAVALNCGQIKTGSASRSDRMAKYNQLLRIEEELGSTAYFPGLNAFKIK</sequence>
<organism>
    <name type="scientific">Flavobacterium johnsoniae (strain ATCC 17061 / DSM 2064 / JCM 8514 / BCRC 14874 / CCUG 350202 / NBRC 14942 / NCIMB 11054 / UW101)</name>
    <name type="common">Cytophaga johnsonae</name>
    <dbReference type="NCBI Taxonomy" id="376686"/>
    <lineage>
        <taxon>Bacteria</taxon>
        <taxon>Pseudomonadati</taxon>
        <taxon>Bacteroidota</taxon>
        <taxon>Flavobacteriia</taxon>
        <taxon>Flavobacteriales</taxon>
        <taxon>Flavobacteriaceae</taxon>
        <taxon>Flavobacterium</taxon>
    </lineage>
</organism>
<evidence type="ECO:0000255" key="1">
    <source>
        <dbReference type="HAMAP-Rule" id="MF_00318"/>
    </source>
</evidence>
<reference key="1">
    <citation type="journal article" date="2009" name="Appl. Environ. Microbiol.">
        <title>Novel features of the polysaccharide-digesting gliding bacterium Flavobacterium johnsoniae as revealed by genome sequence analysis.</title>
        <authorList>
            <person name="McBride M.J."/>
            <person name="Xie G."/>
            <person name="Martens E.C."/>
            <person name="Lapidus A."/>
            <person name="Henrissat B."/>
            <person name="Rhodes R.G."/>
            <person name="Goltsman E."/>
            <person name="Wang W."/>
            <person name="Xu J."/>
            <person name="Hunnicutt D.W."/>
            <person name="Staroscik A.M."/>
            <person name="Hoover T.R."/>
            <person name="Cheng Y.Q."/>
            <person name="Stein J.L."/>
        </authorList>
    </citation>
    <scope>NUCLEOTIDE SEQUENCE [LARGE SCALE GENOMIC DNA]</scope>
    <source>
        <strain>ATCC 17061 / DSM 2064 / JCM 8514 / BCRC 14874 / CCUG 350202 / NBRC 14942 / NCIMB 11054 / UW101</strain>
    </source>
</reference>
<comment type="function">
    <text evidence="1">Catalyzes the reversible conversion of 2-phosphoglycerate (2-PG) into phosphoenolpyruvate (PEP). It is essential for the degradation of carbohydrates via glycolysis.</text>
</comment>
<comment type="catalytic activity">
    <reaction evidence="1">
        <text>(2R)-2-phosphoglycerate = phosphoenolpyruvate + H2O</text>
        <dbReference type="Rhea" id="RHEA:10164"/>
        <dbReference type="ChEBI" id="CHEBI:15377"/>
        <dbReference type="ChEBI" id="CHEBI:58289"/>
        <dbReference type="ChEBI" id="CHEBI:58702"/>
        <dbReference type="EC" id="4.2.1.11"/>
    </reaction>
</comment>
<comment type="cofactor">
    <cofactor evidence="1">
        <name>Mg(2+)</name>
        <dbReference type="ChEBI" id="CHEBI:18420"/>
    </cofactor>
    <text evidence="1">Binds a second Mg(2+) ion via substrate during catalysis.</text>
</comment>
<comment type="pathway">
    <text evidence="1">Carbohydrate degradation; glycolysis; pyruvate from D-glyceraldehyde 3-phosphate: step 4/5.</text>
</comment>
<comment type="subcellular location">
    <subcellularLocation>
        <location evidence="1">Cytoplasm</location>
    </subcellularLocation>
    <subcellularLocation>
        <location evidence="1">Secreted</location>
    </subcellularLocation>
    <subcellularLocation>
        <location evidence="1">Cell surface</location>
    </subcellularLocation>
    <text evidence="1">Fractions of enolase are present in both the cytoplasm and on the cell surface.</text>
</comment>
<comment type="similarity">
    <text evidence="1">Belongs to the enolase family.</text>
</comment>
<proteinExistence type="inferred from homology"/>